<proteinExistence type="inferred from homology"/>
<protein>
    <recommendedName>
        <fullName evidence="1">Chorismate synthase</fullName>
        <shortName evidence="1">CS</shortName>
        <ecNumber evidence="1">4.2.3.5</ecNumber>
    </recommendedName>
    <alternativeName>
        <fullName evidence="1">5-enolpyruvylshikimate-3-phosphate phospholyase</fullName>
    </alternativeName>
</protein>
<name>AROC_LISW6</name>
<feature type="chain" id="PRO_1000022509" description="Chorismate synthase">
    <location>
        <begin position="1"/>
        <end position="388"/>
    </location>
</feature>
<feature type="region of interest" description="Disordered" evidence="2">
    <location>
        <begin position="95"/>
        <end position="118"/>
    </location>
</feature>
<feature type="binding site" evidence="1">
    <location>
        <position position="39"/>
    </location>
    <ligand>
        <name>NADP(+)</name>
        <dbReference type="ChEBI" id="CHEBI:58349"/>
    </ligand>
</feature>
<feature type="binding site" evidence="1">
    <location>
        <position position="45"/>
    </location>
    <ligand>
        <name>NADP(+)</name>
        <dbReference type="ChEBI" id="CHEBI:58349"/>
    </ligand>
</feature>
<feature type="binding site" evidence="1">
    <location>
        <begin position="130"/>
        <end position="132"/>
    </location>
    <ligand>
        <name>FMN</name>
        <dbReference type="ChEBI" id="CHEBI:58210"/>
    </ligand>
</feature>
<feature type="binding site" evidence="1">
    <location>
        <begin position="251"/>
        <end position="252"/>
    </location>
    <ligand>
        <name>FMN</name>
        <dbReference type="ChEBI" id="CHEBI:58210"/>
    </ligand>
</feature>
<feature type="binding site" evidence="1">
    <location>
        <position position="296"/>
    </location>
    <ligand>
        <name>FMN</name>
        <dbReference type="ChEBI" id="CHEBI:58210"/>
    </ligand>
</feature>
<feature type="binding site" evidence="1">
    <location>
        <begin position="311"/>
        <end position="315"/>
    </location>
    <ligand>
        <name>FMN</name>
        <dbReference type="ChEBI" id="CHEBI:58210"/>
    </ligand>
</feature>
<feature type="binding site" evidence="1">
    <location>
        <position position="337"/>
    </location>
    <ligand>
        <name>FMN</name>
        <dbReference type="ChEBI" id="CHEBI:58210"/>
    </ligand>
</feature>
<reference key="1">
    <citation type="journal article" date="2006" name="J. Bacteriol.">
        <title>Whole-genome sequence of Listeria welshimeri reveals common steps in genome reduction with Listeria innocua as compared to Listeria monocytogenes.</title>
        <authorList>
            <person name="Hain T."/>
            <person name="Steinweg C."/>
            <person name="Kuenne C.T."/>
            <person name="Billion A."/>
            <person name="Ghai R."/>
            <person name="Chatterjee S.S."/>
            <person name="Domann E."/>
            <person name="Kaerst U."/>
            <person name="Goesmann A."/>
            <person name="Bekel T."/>
            <person name="Bartels D."/>
            <person name="Kaiser O."/>
            <person name="Meyer F."/>
            <person name="Puehler A."/>
            <person name="Weisshaar B."/>
            <person name="Wehland J."/>
            <person name="Liang C."/>
            <person name="Dandekar T."/>
            <person name="Lampidis R."/>
            <person name="Kreft J."/>
            <person name="Goebel W."/>
            <person name="Chakraborty T."/>
        </authorList>
    </citation>
    <scope>NUCLEOTIDE SEQUENCE [LARGE SCALE GENOMIC DNA]</scope>
    <source>
        <strain>ATCC 35897 / DSM 20650 / CCUG 15529 / CIP 8149 / NCTC 11857 / SLCC 5334 / V8</strain>
    </source>
</reference>
<dbReference type="EC" id="4.2.3.5" evidence="1"/>
<dbReference type="EMBL" id="AM263198">
    <property type="protein sequence ID" value="CAK21372.1"/>
    <property type="molecule type" value="Genomic_DNA"/>
</dbReference>
<dbReference type="RefSeq" id="WP_011702720.1">
    <property type="nucleotide sequence ID" value="NC_008555.1"/>
</dbReference>
<dbReference type="SMR" id="A0AK40"/>
<dbReference type="STRING" id="386043.lwe1954"/>
<dbReference type="GeneID" id="61189854"/>
<dbReference type="KEGG" id="lwe:lwe1954"/>
<dbReference type="eggNOG" id="COG0082">
    <property type="taxonomic scope" value="Bacteria"/>
</dbReference>
<dbReference type="HOGENOM" id="CLU_034547_2_0_9"/>
<dbReference type="OrthoDB" id="9771806at2"/>
<dbReference type="UniPathway" id="UPA00053">
    <property type="reaction ID" value="UER00090"/>
</dbReference>
<dbReference type="Proteomes" id="UP000000779">
    <property type="component" value="Chromosome"/>
</dbReference>
<dbReference type="GO" id="GO:0005829">
    <property type="term" value="C:cytosol"/>
    <property type="evidence" value="ECO:0007669"/>
    <property type="project" value="TreeGrafter"/>
</dbReference>
<dbReference type="GO" id="GO:0004107">
    <property type="term" value="F:chorismate synthase activity"/>
    <property type="evidence" value="ECO:0007669"/>
    <property type="project" value="UniProtKB-UniRule"/>
</dbReference>
<dbReference type="GO" id="GO:0010181">
    <property type="term" value="F:FMN binding"/>
    <property type="evidence" value="ECO:0007669"/>
    <property type="project" value="TreeGrafter"/>
</dbReference>
<dbReference type="GO" id="GO:0008652">
    <property type="term" value="P:amino acid biosynthetic process"/>
    <property type="evidence" value="ECO:0007669"/>
    <property type="project" value="UniProtKB-KW"/>
</dbReference>
<dbReference type="GO" id="GO:0009073">
    <property type="term" value="P:aromatic amino acid family biosynthetic process"/>
    <property type="evidence" value="ECO:0007669"/>
    <property type="project" value="UniProtKB-KW"/>
</dbReference>
<dbReference type="GO" id="GO:0009423">
    <property type="term" value="P:chorismate biosynthetic process"/>
    <property type="evidence" value="ECO:0007669"/>
    <property type="project" value="UniProtKB-UniRule"/>
</dbReference>
<dbReference type="CDD" id="cd07304">
    <property type="entry name" value="Chorismate_synthase"/>
    <property type="match status" value="1"/>
</dbReference>
<dbReference type="FunFam" id="3.60.150.10:FF:000002">
    <property type="entry name" value="Chorismate synthase"/>
    <property type="match status" value="1"/>
</dbReference>
<dbReference type="Gene3D" id="3.60.150.10">
    <property type="entry name" value="Chorismate synthase AroC"/>
    <property type="match status" value="1"/>
</dbReference>
<dbReference type="HAMAP" id="MF_00300">
    <property type="entry name" value="Chorismate_synth"/>
    <property type="match status" value="1"/>
</dbReference>
<dbReference type="InterPro" id="IPR000453">
    <property type="entry name" value="Chorismate_synth"/>
</dbReference>
<dbReference type="InterPro" id="IPR035904">
    <property type="entry name" value="Chorismate_synth_AroC_sf"/>
</dbReference>
<dbReference type="InterPro" id="IPR020541">
    <property type="entry name" value="Chorismate_synthase_CS"/>
</dbReference>
<dbReference type="NCBIfam" id="TIGR00033">
    <property type="entry name" value="aroC"/>
    <property type="match status" value="1"/>
</dbReference>
<dbReference type="NCBIfam" id="NF003793">
    <property type="entry name" value="PRK05382.1"/>
    <property type="match status" value="1"/>
</dbReference>
<dbReference type="PANTHER" id="PTHR21085">
    <property type="entry name" value="CHORISMATE SYNTHASE"/>
    <property type="match status" value="1"/>
</dbReference>
<dbReference type="PANTHER" id="PTHR21085:SF0">
    <property type="entry name" value="CHORISMATE SYNTHASE"/>
    <property type="match status" value="1"/>
</dbReference>
<dbReference type="Pfam" id="PF01264">
    <property type="entry name" value="Chorismate_synt"/>
    <property type="match status" value="1"/>
</dbReference>
<dbReference type="PIRSF" id="PIRSF001456">
    <property type="entry name" value="Chorismate_synth"/>
    <property type="match status" value="1"/>
</dbReference>
<dbReference type="SUPFAM" id="SSF103263">
    <property type="entry name" value="Chorismate synthase, AroC"/>
    <property type="match status" value="1"/>
</dbReference>
<dbReference type="PROSITE" id="PS00787">
    <property type="entry name" value="CHORISMATE_SYNTHASE_1"/>
    <property type="match status" value="1"/>
</dbReference>
<dbReference type="PROSITE" id="PS00788">
    <property type="entry name" value="CHORISMATE_SYNTHASE_2"/>
    <property type="match status" value="1"/>
</dbReference>
<dbReference type="PROSITE" id="PS00789">
    <property type="entry name" value="CHORISMATE_SYNTHASE_3"/>
    <property type="match status" value="1"/>
</dbReference>
<gene>
    <name evidence="1" type="primary">aroC</name>
    <name type="ordered locus">lwe1954</name>
</gene>
<evidence type="ECO:0000255" key="1">
    <source>
        <dbReference type="HAMAP-Rule" id="MF_00300"/>
    </source>
</evidence>
<evidence type="ECO:0000256" key="2">
    <source>
        <dbReference type="SAM" id="MobiDB-lite"/>
    </source>
</evidence>
<sequence>MRYLTAGESHGPGLTTIIEGLPAGMPLLAEDVNKELKRRQGGHGRGARMRIEKDQVQITAGIRHGKTLGAPVAMFVENKDWKHWETVMSIEPVPEKNEKSRRVSRPRPGHADLVGGMKYGHNDMRNVLERSSARETTVRVAAGAIAKKLLHELGIEVAGHVLEIGGTRANLTRDFSVSEIKETSEASPVRCLDEVAEKEMMQKIDDAKKNGDTIGGIVEVVVGGVPAGLGSYVQWDKKLDAKIARAIVSINAFKGAEFGVGFEAARKPGSEVMDEILWSKEDGYTRRTNNLGGFEGGMTNGMPIVVRGVMKPIPTLYKPLQSVDIDSKETFNASVERSDSCAVPAASVVAEAVVAWEVAVAVLEKFDGDRFDTLKKHVEEHRNLTKEF</sequence>
<accession>A0AK40</accession>
<organism>
    <name type="scientific">Listeria welshimeri serovar 6b (strain ATCC 35897 / DSM 20650 / CCUG 15529 / CIP 8149 / NCTC 11857 / SLCC 5334 / V8)</name>
    <dbReference type="NCBI Taxonomy" id="386043"/>
    <lineage>
        <taxon>Bacteria</taxon>
        <taxon>Bacillati</taxon>
        <taxon>Bacillota</taxon>
        <taxon>Bacilli</taxon>
        <taxon>Bacillales</taxon>
        <taxon>Listeriaceae</taxon>
        <taxon>Listeria</taxon>
    </lineage>
</organism>
<comment type="function">
    <text evidence="1">Catalyzes the anti-1,4-elimination of the C-3 phosphate and the C-6 proR hydrogen from 5-enolpyruvylshikimate-3-phosphate (EPSP) to yield chorismate, which is the branch point compound that serves as the starting substrate for the three terminal pathways of aromatic amino acid biosynthesis. This reaction introduces a second double bond into the aromatic ring system.</text>
</comment>
<comment type="catalytic activity">
    <reaction evidence="1">
        <text>5-O-(1-carboxyvinyl)-3-phosphoshikimate = chorismate + phosphate</text>
        <dbReference type="Rhea" id="RHEA:21020"/>
        <dbReference type="ChEBI" id="CHEBI:29748"/>
        <dbReference type="ChEBI" id="CHEBI:43474"/>
        <dbReference type="ChEBI" id="CHEBI:57701"/>
        <dbReference type="EC" id="4.2.3.5"/>
    </reaction>
</comment>
<comment type="cofactor">
    <cofactor evidence="1">
        <name>FMNH2</name>
        <dbReference type="ChEBI" id="CHEBI:57618"/>
    </cofactor>
    <text evidence="1">Reduced FMN (FMNH(2)).</text>
</comment>
<comment type="pathway">
    <text evidence="1">Metabolic intermediate biosynthesis; chorismate biosynthesis; chorismate from D-erythrose 4-phosphate and phosphoenolpyruvate: step 7/7.</text>
</comment>
<comment type="subunit">
    <text evidence="1">Homotetramer.</text>
</comment>
<comment type="similarity">
    <text evidence="1">Belongs to the chorismate synthase family.</text>
</comment>
<keyword id="KW-0028">Amino-acid biosynthesis</keyword>
<keyword id="KW-0057">Aromatic amino acid biosynthesis</keyword>
<keyword id="KW-0274">FAD</keyword>
<keyword id="KW-0285">Flavoprotein</keyword>
<keyword id="KW-0288">FMN</keyword>
<keyword id="KW-0456">Lyase</keyword>
<keyword id="KW-0521">NADP</keyword>